<dbReference type="EMBL" id="AP008937">
    <property type="protein sequence ID" value="BAG27854.1"/>
    <property type="molecule type" value="Genomic_DNA"/>
</dbReference>
<dbReference type="RefSeq" id="WP_004562958.1">
    <property type="nucleotide sequence ID" value="NC_010610.1"/>
</dbReference>
<dbReference type="SMR" id="B2GDX2"/>
<dbReference type="GeneID" id="83716105"/>
<dbReference type="KEGG" id="lfe:LAF_1518"/>
<dbReference type="eggNOG" id="COG0049">
    <property type="taxonomic scope" value="Bacteria"/>
</dbReference>
<dbReference type="HOGENOM" id="CLU_072226_1_1_9"/>
<dbReference type="Proteomes" id="UP000001697">
    <property type="component" value="Chromosome"/>
</dbReference>
<dbReference type="GO" id="GO:0015935">
    <property type="term" value="C:small ribosomal subunit"/>
    <property type="evidence" value="ECO:0007669"/>
    <property type="project" value="InterPro"/>
</dbReference>
<dbReference type="GO" id="GO:0019843">
    <property type="term" value="F:rRNA binding"/>
    <property type="evidence" value="ECO:0007669"/>
    <property type="project" value="UniProtKB-UniRule"/>
</dbReference>
<dbReference type="GO" id="GO:0003735">
    <property type="term" value="F:structural constituent of ribosome"/>
    <property type="evidence" value="ECO:0007669"/>
    <property type="project" value="InterPro"/>
</dbReference>
<dbReference type="GO" id="GO:0000049">
    <property type="term" value="F:tRNA binding"/>
    <property type="evidence" value="ECO:0007669"/>
    <property type="project" value="UniProtKB-UniRule"/>
</dbReference>
<dbReference type="GO" id="GO:0006412">
    <property type="term" value="P:translation"/>
    <property type="evidence" value="ECO:0007669"/>
    <property type="project" value="UniProtKB-UniRule"/>
</dbReference>
<dbReference type="CDD" id="cd14869">
    <property type="entry name" value="uS7_Bacteria"/>
    <property type="match status" value="1"/>
</dbReference>
<dbReference type="FunFam" id="1.10.455.10:FF:000001">
    <property type="entry name" value="30S ribosomal protein S7"/>
    <property type="match status" value="1"/>
</dbReference>
<dbReference type="Gene3D" id="1.10.455.10">
    <property type="entry name" value="Ribosomal protein S7 domain"/>
    <property type="match status" value="1"/>
</dbReference>
<dbReference type="HAMAP" id="MF_00480_B">
    <property type="entry name" value="Ribosomal_uS7_B"/>
    <property type="match status" value="1"/>
</dbReference>
<dbReference type="InterPro" id="IPR000235">
    <property type="entry name" value="Ribosomal_uS7"/>
</dbReference>
<dbReference type="InterPro" id="IPR005717">
    <property type="entry name" value="Ribosomal_uS7_bac/org-type"/>
</dbReference>
<dbReference type="InterPro" id="IPR020606">
    <property type="entry name" value="Ribosomal_uS7_CS"/>
</dbReference>
<dbReference type="InterPro" id="IPR023798">
    <property type="entry name" value="Ribosomal_uS7_dom"/>
</dbReference>
<dbReference type="InterPro" id="IPR036823">
    <property type="entry name" value="Ribosomal_uS7_dom_sf"/>
</dbReference>
<dbReference type="NCBIfam" id="TIGR01029">
    <property type="entry name" value="rpsG_bact"/>
    <property type="match status" value="1"/>
</dbReference>
<dbReference type="PANTHER" id="PTHR11205">
    <property type="entry name" value="RIBOSOMAL PROTEIN S7"/>
    <property type="match status" value="1"/>
</dbReference>
<dbReference type="Pfam" id="PF00177">
    <property type="entry name" value="Ribosomal_S7"/>
    <property type="match status" value="1"/>
</dbReference>
<dbReference type="PIRSF" id="PIRSF002122">
    <property type="entry name" value="RPS7p_RPS7a_RPS5e_RPS7o"/>
    <property type="match status" value="1"/>
</dbReference>
<dbReference type="SUPFAM" id="SSF47973">
    <property type="entry name" value="Ribosomal protein S7"/>
    <property type="match status" value="1"/>
</dbReference>
<dbReference type="PROSITE" id="PS00052">
    <property type="entry name" value="RIBOSOMAL_S7"/>
    <property type="match status" value="1"/>
</dbReference>
<reference key="1">
    <citation type="journal article" date="2008" name="DNA Res.">
        <title>Comparative genome analysis of Lactobacillus reuteri and Lactobacillus fermentum reveal a genomic island for reuterin and cobalamin production.</title>
        <authorList>
            <person name="Morita H."/>
            <person name="Toh H."/>
            <person name="Fukuda S."/>
            <person name="Horikawa H."/>
            <person name="Oshima K."/>
            <person name="Suzuki T."/>
            <person name="Murakami M."/>
            <person name="Hisamatsu S."/>
            <person name="Kato Y."/>
            <person name="Takizawa T."/>
            <person name="Fukuoka H."/>
            <person name="Yoshimura T."/>
            <person name="Itoh K."/>
            <person name="O'Sullivan D.J."/>
            <person name="McKay L.L."/>
            <person name="Ohno H."/>
            <person name="Kikuchi J."/>
            <person name="Masaoka T."/>
            <person name="Hattori M."/>
        </authorList>
    </citation>
    <scope>NUCLEOTIDE SEQUENCE [LARGE SCALE GENOMIC DNA]</scope>
    <source>
        <strain>NBRC 3956 / LMG 18251</strain>
    </source>
</reference>
<feature type="chain" id="PRO_1000125960" description="Small ribosomal subunit protein uS7">
    <location>
        <begin position="1"/>
        <end position="156"/>
    </location>
</feature>
<organism>
    <name type="scientific">Limosilactobacillus fermentum (strain NBRC 3956 / LMG 18251)</name>
    <name type="common">Lactobacillus fermentum</name>
    <dbReference type="NCBI Taxonomy" id="334390"/>
    <lineage>
        <taxon>Bacteria</taxon>
        <taxon>Bacillati</taxon>
        <taxon>Bacillota</taxon>
        <taxon>Bacilli</taxon>
        <taxon>Lactobacillales</taxon>
        <taxon>Lactobacillaceae</taxon>
        <taxon>Limosilactobacillus</taxon>
    </lineage>
</organism>
<gene>
    <name evidence="1" type="primary">rpsG</name>
    <name type="ordered locus">LAF_1518</name>
</gene>
<name>RS7_LIMF3</name>
<accession>B2GDX2</accession>
<comment type="function">
    <text evidence="1">One of the primary rRNA binding proteins, it binds directly to 16S rRNA where it nucleates assembly of the head domain of the 30S subunit. Is located at the subunit interface close to the decoding center, probably blocks exit of the E-site tRNA.</text>
</comment>
<comment type="subunit">
    <text evidence="1">Part of the 30S ribosomal subunit. Contacts proteins S9 and S11.</text>
</comment>
<comment type="similarity">
    <text evidence="1">Belongs to the universal ribosomal protein uS7 family.</text>
</comment>
<protein>
    <recommendedName>
        <fullName evidence="1">Small ribosomal subunit protein uS7</fullName>
    </recommendedName>
    <alternativeName>
        <fullName evidence="2">30S ribosomal protein S7</fullName>
    </alternativeName>
</protein>
<evidence type="ECO:0000255" key="1">
    <source>
        <dbReference type="HAMAP-Rule" id="MF_00480"/>
    </source>
</evidence>
<evidence type="ECO:0000305" key="2"/>
<keyword id="KW-1185">Reference proteome</keyword>
<keyword id="KW-0687">Ribonucleoprotein</keyword>
<keyword id="KW-0689">Ribosomal protein</keyword>
<keyword id="KW-0694">RNA-binding</keyword>
<keyword id="KW-0699">rRNA-binding</keyword>
<keyword id="KW-0820">tRNA-binding</keyword>
<sequence length="156" mass="17790">MPRKGHVAKPEVLPDPIYNSKLVTSLINHLMLDGKRGTASKILYQALDQIKEQTGNDPIEVFEQAMENIKPALEVKARRIGGSNYQVPIEVRPDRQRTLALRWLVQYARLRGEHTMVERLSGEIIDASNNTGASIKKKEDTLRMAEANRAFAHYRW</sequence>
<proteinExistence type="inferred from homology"/>